<protein>
    <recommendedName>
        <fullName evidence="1">Probable dual-specificity RNA methyltransferase RlmN</fullName>
        <ecNumber evidence="1">2.1.1.192</ecNumber>
    </recommendedName>
    <alternativeName>
        <fullName evidence="1">23S rRNA (adenine(2503)-C(2))-methyltransferase</fullName>
    </alternativeName>
    <alternativeName>
        <fullName evidence="1">23S rRNA m2A2503 methyltransferase</fullName>
    </alternativeName>
    <alternativeName>
        <fullName evidence="1">Ribosomal RNA large subunit methyltransferase N</fullName>
    </alternativeName>
    <alternativeName>
        <fullName evidence="1">tRNA (adenine(37)-C(2))-methyltransferase</fullName>
    </alternativeName>
    <alternativeName>
        <fullName evidence="1">tRNA m2A37 methyltransferase</fullName>
    </alternativeName>
</protein>
<sequence>MPNSKTNIKAYTRQELRDTIAALGEPAYRADQIHRWLFSDWVTDFEKMKNISASLREELSRRYVIPSCSFENEAIEERSVSAPETSKFLVGLHDDEMVETVLIPSPDRHTVCVSSQVGCPLRCTFCATGYMGFTRNLLASEIVEQVLLVNERLGDRSPDNHVTNMVFMGMGEPLLNLNNVFDAIETLTNQSYNFSLSRKRITISTVGLIPQIGELARSGLSIKLAISLHAADQEKRTSLIPVAKEHTLEELRHALHEYADMVKEPVTLVYMLIEGVNDADQDAINLIRFAQGFLCKINLIDYNCIVNVKFNPVKAEKRDRFIHTLVNAGVHVTVRKSQGASIDAACGQLALQKKNKTASRPY</sequence>
<proteinExistence type="inferred from homology"/>
<accession>B3EJF5</accession>
<dbReference type="EC" id="2.1.1.192" evidence="1"/>
<dbReference type="EMBL" id="CP001101">
    <property type="protein sequence ID" value="ACE04355.1"/>
    <property type="molecule type" value="Genomic_DNA"/>
</dbReference>
<dbReference type="SMR" id="B3EJF5"/>
<dbReference type="STRING" id="331678.Cphamn1_1427"/>
<dbReference type="KEGG" id="cpb:Cphamn1_1427"/>
<dbReference type="eggNOG" id="COG0820">
    <property type="taxonomic scope" value="Bacteria"/>
</dbReference>
<dbReference type="HOGENOM" id="CLU_029101_0_1_10"/>
<dbReference type="OrthoDB" id="9793973at2"/>
<dbReference type="GO" id="GO:0005737">
    <property type="term" value="C:cytoplasm"/>
    <property type="evidence" value="ECO:0007669"/>
    <property type="project" value="UniProtKB-SubCell"/>
</dbReference>
<dbReference type="GO" id="GO:0051539">
    <property type="term" value="F:4 iron, 4 sulfur cluster binding"/>
    <property type="evidence" value="ECO:0007669"/>
    <property type="project" value="UniProtKB-UniRule"/>
</dbReference>
<dbReference type="GO" id="GO:0046872">
    <property type="term" value="F:metal ion binding"/>
    <property type="evidence" value="ECO:0007669"/>
    <property type="project" value="UniProtKB-KW"/>
</dbReference>
<dbReference type="GO" id="GO:0070040">
    <property type="term" value="F:rRNA (adenine(2503)-C2-)-methyltransferase activity"/>
    <property type="evidence" value="ECO:0007669"/>
    <property type="project" value="UniProtKB-UniRule"/>
</dbReference>
<dbReference type="GO" id="GO:0019843">
    <property type="term" value="F:rRNA binding"/>
    <property type="evidence" value="ECO:0007669"/>
    <property type="project" value="UniProtKB-UniRule"/>
</dbReference>
<dbReference type="GO" id="GO:0002935">
    <property type="term" value="F:tRNA (adenine(37)-C2)-methyltransferase activity"/>
    <property type="evidence" value="ECO:0007669"/>
    <property type="project" value="UniProtKB-UniRule"/>
</dbReference>
<dbReference type="GO" id="GO:0000049">
    <property type="term" value="F:tRNA binding"/>
    <property type="evidence" value="ECO:0007669"/>
    <property type="project" value="UniProtKB-UniRule"/>
</dbReference>
<dbReference type="GO" id="GO:0070475">
    <property type="term" value="P:rRNA base methylation"/>
    <property type="evidence" value="ECO:0007669"/>
    <property type="project" value="UniProtKB-UniRule"/>
</dbReference>
<dbReference type="GO" id="GO:0030488">
    <property type="term" value="P:tRNA methylation"/>
    <property type="evidence" value="ECO:0007669"/>
    <property type="project" value="UniProtKB-UniRule"/>
</dbReference>
<dbReference type="CDD" id="cd01335">
    <property type="entry name" value="Radical_SAM"/>
    <property type="match status" value="1"/>
</dbReference>
<dbReference type="FunFam" id="3.20.20.70:FF:000014">
    <property type="entry name" value="Probable dual-specificity RNA methyltransferase RlmN"/>
    <property type="match status" value="1"/>
</dbReference>
<dbReference type="Gene3D" id="1.10.150.530">
    <property type="match status" value="1"/>
</dbReference>
<dbReference type="Gene3D" id="3.20.20.70">
    <property type="entry name" value="Aldolase class I"/>
    <property type="match status" value="1"/>
</dbReference>
<dbReference type="HAMAP" id="MF_01849">
    <property type="entry name" value="RNA_methyltr_RlmN"/>
    <property type="match status" value="1"/>
</dbReference>
<dbReference type="InterPro" id="IPR013785">
    <property type="entry name" value="Aldolase_TIM"/>
</dbReference>
<dbReference type="InterPro" id="IPR040072">
    <property type="entry name" value="Methyltransferase_A"/>
</dbReference>
<dbReference type="InterPro" id="IPR048641">
    <property type="entry name" value="RlmN_N"/>
</dbReference>
<dbReference type="InterPro" id="IPR027492">
    <property type="entry name" value="RNA_MTrfase_RlmN"/>
</dbReference>
<dbReference type="InterPro" id="IPR004383">
    <property type="entry name" value="rRNA_lsu_MTrfase_RlmN/Cfr"/>
</dbReference>
<dbReference type="InterPro" id="IPR007197">
    <property type="entry name" value="rSAM"/>
</dbReference>
<dbReference type="NCBIfam" id="TIGR00048">
    <property type="entry name" value="rRNA_mod_RlmN"/>
    <property type="match status" value="1"/>
</dbReference>
<dbReference type="PANTHER" id="PTHR30544">
    <property type="entry name" value="23S RRNA METHYLTRANSFERASE"/>
    <property type="match status" value="1"/>
</dbReference>
<dbReference type="PANTHER" id="PTHR30544:SF5">
    <property type="entry name" value="RADICAL SAM CORE DOMAIN-CONTAINING PROTEIN"/>
    <property type="match status" value="1"/>
</dbReference>
<dbReference type="Pfam" id="PF04055">
    <property type="entry name" value="Radical_SAM"/>
    <property type="match status" value="1"/>
</dbReference>
<dbReference type="Pfam" id="PF21016">
    <property type="entry name" value="RlmN_N"/>
    <property type="match status" value="1"/>
</dbReference>
<dbReference type="PIRSF" id="PIRSF006004">
    <property type="entry name" value="CHP00048"/>
    <property type="match status" value="1"/>
</dbReference>
<dbReference type="SFLD" id="SFLDF00275">
    <property type="entry name" value="adenosine_C2_methyltransferase"/>
    <property type="match status" value="1"/>
</dbReference>
<dbReference type="SFLD" id="SFLDG01062">
    <property type="entry name" value="methyltransferase_(Class_A)"/>
    <property type="match status" value="1"/>
</dbReference>
<dbReference type="SUPFAM" id="SSF102114">
    <property type="entry name" value="Radical SAM enzymes"/>
    <property type="match status" value="1"/>
</dbReference>
<dbReference type="PROSITE" id="PS51918">
    <property type="entry name" value="RADICAL_SAM"/>
    <property type="match status" value="1"/>
</dbReference>
<keyword id="KW-0004">4Fe-4S</keyword>
<keyword id="KW-0963">Cytoplasm</keyword>
<keyword id="KW-1015">Disulfide bond</keyword>
<keyword id="KW-0408">Iron</keyword>
<keyword id="KW-0411">Iron-sulfur</keyword>
<keyword id="KW-0479">Metal-binding</keyword>
<keyword id="KW-0489">Methyltransferase</keyword>
<keyword id="KW-0698">rRNA processing</keyword>
<keyword id="KW-0949">S-adenosyl-L-methionine</keyword>
<keyword id="KW-0808">Transferase</keyword>
<keyword id="KW-0819">tRNA processing</keyword>
<comment type="function">
    <text evidence="1">Specifically methylates position 2 of adenine 2503 in 23S rRNA and position 2 of adenine 37 in tRNAs.</text>
</comment>
<comment type="catalytic activity">
    <reaction evidence="1">
        <text>adenosine(2503) in 23S rRNA + 2 reduced [2Fe-2S]-[ferredoxin] + 2 S-adenosyl-L-methionine = 2-methyladenosine(2503) in 23S rRNA + 5'-deoxyadenosine + L-methionine + 2 oxidized [2Fe-2S]-[ferredoxin] + S-adenosyl-L-homocysteine</text>
        <dbReference type="Rhea" id="RHEA:42916"/>
        <dbReference type="Rhea" id="RHEA-COMP:10000"/>
        <dbReference type="Rhea" id="RHEA-COMP:10001"/>
        <dbReference type="Rhea" id="RHEA-COMP:10152"/>
        <dbReference type="Rhea" id="RHEA-COMP:10282"/>
        <dbReference type="ChEBI" id="CHEBI:17319"/>
        <dbReference type="ChEBI" id="CHEBI:33737"/>
        <dbReference type="ChEBI" id="CHEBI:33738"/>
        <dbReference type="ChEBI" id="CHEBI:57844"/>
        <dbReference type="ChEBI" id="CHEBI:57856"/>
        <dbReference type="ChEBI" id="CHEBI:59789"/>
        <dbReference type="ChEBI" id="CHEBI:74411"/>
        <dbReference type="ChEBI" id="CHEBI:74497"/>
        <dbReference type="EC" id="2.1.1.192"/>
    </reaction>
</comment>
<comment type="catalytic activity">
    <reaction evidence="1">
        <text>adenosine(37) in tRNA + 2 reduced [2Fe-2S]-[ferredoxin] + 2 S-adenosyl-L-methionine = 2-methyladenosine(37) in tRNA + 5'-deoxyadenosine + L-methionine + 2 oxidized [2Fe-2S]-[ferredoxin] + S-adenosyl-L-homocysteine</text>
        <dbReference type="Rhea" id="RHEA:43332"/>
        <dbReference type="Rhea" id="RHEA-COMP:10000"/>
        <dbReference type="Rhea" id="RHEA-COMP:10001"/>
        <dbReference type="Rhea" id="RHEA-COMP:10162"/>
        <dbReference type="Rhea" id="RHEA-COMP:10485"/>
        <dbReference type="ChEBI" id="CHEBI:17319"/>
        <dbReference type="ChEBI" id="CHEBI:33737"/>
        <dbReference type="ChEBI" id="CHEBI:33738"/>
        <dbReference type="ChEBI" id="CHEBI:57844"/>
        <dbReference type="ChEBI" id="CHEBI:57856"/>
        <dbReference type="ChEBI" id="CHEBI:59789"/>
        <dbReference type="ChEBI" id="CHEBI:74411"/>
        <dbReference type="ChEBI" id="CHEBI:74497"/>
        <dbReference type="EC" id="2.1.1.192"/>
    </reaction>
</comment>
<comment type="cofactor">
    <cofactor evidence="1">
        <name>[4Fe-4S] cluster</name>
        <dbReference type="ChEBI" id="CHEBI:49883"/>
    </cofactor>
    <text evidence="1">Binds 1 [4Fe-4S] cluster. The cluster is coordinated with 3 cysteines and an exchangeable S-adenosyl-L-methionine.</text>
</comment>
<comment type="subcellular location">
    <subcellularLocation>
        <location evidence="1">Cytoplasm</location>
    </subcellularLocation>
</comment>
<comment type="miscellaneous">
    <text evidence="1">Reaction proceeds by a ping-pong mechanism involving intermediate methylation of a conserved cysteine residue.</text>
</comment>
<comment type="similarity">
    <text evidence="1">Belongs to the radical SAM superfamily. RlmN family.</text>
</comment>
<reference key="1">
    <citation type="submission" date="2008-06" db="EMBL/GenBank/DDBJ databases">
        <title>Complete sequence of Chlorobium phaeobacteroides BS1.</title>
        <authorList>
            <consortium name="US DOE Joint Genome Institute"/>
            <person name="Lucas S."/>
            <person name="Copeland A."/>
            <person name="Lapidus A."/>
            <person name="Glavina del Rio T."/>
            <person name="Dalin E."/>
            <person name="Tice H."/>
            <person name="Bruce D."/>
            <person name="Goodwin L."/>
            <person name="Pitluck S."/>
            <person name="Schmutz J."/>
            <person name="Larimer F."/>
            <person name="Land M."/>
            <person name="Hauser L."/>
            <person name="Kyrpides N."/>
            <person name="Ovchinnikova G."/>
            <person name="Li T."/>
            <person name="Liu Z."/>
            <person name="Zhao F."/>
            <person name="Overmann J."/>
            <person name="Bryant D.A."/>
            <person name="Richardson P."/>
        </authorList>
    </citation>
    <scope>NUCLEOTIDE SEQUENCE [LARGE SCALE GENOMIC DNA]</scope>
    <source>
        <strain>BS1</strain>
    </source>
</reference>
<feature type="chain" id="PRO_1000188559" description="Probable dual-specificity RNA methyltransferase RlmN">
    <location>
        <begin position="1"/>
        <end position="362"/>
    </location>
</feature>
<feature type="domain" description="Radical SAM core" evidence="2">
    <location>
        <begin position="105"/>
        <end position="341"/>
    </location>
</feature>
<feature type="active site" description="Proton acceptor" evidence="1">
    <location>
        <position position="99"/>
    </location>
</feature>
<feature type="active site" description="S-methylcysteine intermediate" evidence="1">
    <location>
        <position position="346"/>
    </location>
</feature>
<feature type="binding site" evidence="1">
    <location>
        <position position="119"/>
    </location>
    <ligand>
        <name>[4Fe-4S] cluster</name>
        <dbReference type="ChEBI" id="CHEBI:49883"/>
        <note>4Fe-4S-S-AdoMet</note>
    </ligand>
</feature>
<feature type="binding site" evidence="1">
    <location>
        <position position="123"/>
    </location>
    <ligand>
        <name>[4Fe-4S] cluster</name>
        <dbReference type="ChEBI" id="CHEBI:49883"/>
        <note>4Fe-4S-S-AdoMet</note>
    </ligand>
</feature>
<feature type="binding site" evidence="1">
    <location>
        <position position="126"/>
    </location>
    <ligand>
        <name>[4Fe-4S] cluster</name>
        <dbReference type="ChEBI" id="CHEBI:49883"/>
        <note>4Fe-4S-S-AdoMet</note>
    </ligand>
</feature>
<feature type="binding site" evidence="1">
    <location>
        <begin position="171"/>
        <end position="172"/>
    </location>
    <ligand>
        <name>S-adenosyl-L-methionine</name>
        <dbReference type="ChEBI" id="CHEBI:59789"/>
    </ligand>
</feature>
<feature type="binding site" evidence="1">
    <location>
        <position position="204"/>
    </location>
    <ligand>
        <name>S-adenosyl-L-methionine</name>
        <dbReference type="ChEBI" id="CHEBI:59789"/>
    </ligand>
</feature>
<feature type="binding site" evidence="1">
    <location>
        <begin position="227"/>
        <end position="229"/>
    </location>
    <ligand>
        <name>S-adenosyl-L-methionine</name>
        <dbReference type="ChEBI" id="CHEBI:59789"/>
    </ligand>
</feature>
<feature type="binding site" evidence="1">
    <location>
        <position position="303"/>
    </location>
    <ligand>
        <name>S-adenosyl-L-methionine</name>
        <dbReference type="ChEBI" id="CHEBI:59789"/>
    </ligand>
</feature>
<feature type="disulfide bond" description="(transient)" evidence="1">
    <location>
        <begin position="112"/>
        <end position="346"/>
    </location>
</feature>
<name>RLMN_CHLPB</name>
<organism>
    <name type="scientific">Chlorobium phaeobacteroides (strain BS1)</name>
    <dbReference type="NCBI Taxonomy" id="331678"/>
    <lineage>
        <taxon>Bacteria</taxon>
        <taxon>Pseudomonadati</taxon>
        <taxon>Chlorobiota</taxon>
        <taxon>Chlorobiia</taxon>
        <taxon>Chlorobiales</taxon>
        <taxon>Chlorobiaceae</taxon>
        <taxon>Chlorobium/Pelodictyon group</taxon>
        <taxon>Chlorobium</taxon>
    </lineage>
</organism>
<evidence type="ECO:0000255" key="1">
    <source>
        <dbReference type="HAMAP-Rule" id="MF_01849"/>
    </source>
</evidence>
<evidence type="ECO:0000255" key="2">
    <source>
        <dbReference type="PROSITE-ProRule" id="PRU01266"/>
    </source>
</evidence>
<gene>
    <name evidence="1" type="primary">rlmN</name>
    <name type="ordered locus">Cphamn1_1427</name>
</gene>